<evidence type="ECO:0000250" key="1"/>
<evidence type="ECO:0000250" key="2">
    <source>
        <dbReference type="UniProtKB" id="P01127"/>
    </source>
</evidence>
<evidence type="ECO:0000250" key="3">
    <source>
        <dbReference type="UniProtKB" id="P31240"/>
    </source>
</evidence>
<evidence type="ECO:0000305" key="4"/>
<gene>
    <name type="primary">PDGFB</name>
</gene>
<accession>P20034</accession>
<proteinExistence type="evidence at protein level"/>
<keyword id="KW-0217">Developmental protein</keyword>
<keyword id="KW-0903">Direct protein sequencing</keyword>
<keyword id="KW-1015">Disulfide bond</keyword>
<keyword id="KW-0339">Growth factor</keyword>
<keyword id="KW-0497">Mitogen</keyword>
<keyword id="KW-0656">Proto-oncogene</keyword>
<keyword id="KW-1185">Reference proteome</keyword>
<keyword id="KW-0964">Secreted</keyword>
<dbReference type="PIR" id="A22789">
    <property type="entry name" value="A22789"/>
</dbReference>
<dbReference type="InParanoid" id="P20034"/>
<dbReference type="Proteomes" id="UP000008227">
    <property type="component" value="Unplaced"/>
</dbReference>
<dbReference type="Proteomes" id="UP000314985">
    <property type="component" value="Unplaced"/>
</dbReference>
<dbReference type="Proteomes" id="UP000694570">
    <property type="component" value="Unplaced"/>
</dbReference>
<dbReference type="Proteomes" id="UP000694571">
    <property type="component" value="Unplaced"/>
</dbReference>
<dbReference type="Proteomes" id="UP000694720">
    <property type="component" value="Unplaced"/>
</dbReference>
<dbReference type="Proteomes" id="UP000694722">
    <property type="component" value="Unplaced"/>
</dbReference>
<dbReference type="Proteomes" id="UP000694723">
    <property type="component" value="Unplaced"/>
</dbReference>
<dbReference type="Proteomes" id="UP000694724">
    <property type="component" value="Unplaced"/>
</dbReference>
<dbReference type="Proteomes" id="UP000694725">
    <property type="component" value="Unplaced"/>
</dbReference>
<dbReference type="Proteomes" id="UP000694726">
    <property type="component" value="Unplaced"/>
</dbReference>
<dbReference type="Proteomes" id="UP000694727">
    <property type="component" value="Unplaced"/>
</dbReference>
<dbReference type="Proteomes" id="UP000694728">
    <property type="component" value="Unplaced"/>
</dbReference>
<dbReference type="GO" id="GO:0005576">
    <property type="term" value="C:extracellular region"/>
    <property type="evidence" value="ECO:0007669"/>
    <property type="project" value="UniProtKB-SubCell"/>
</dbReference>
<dbReference type="GO" id="GO:0008083">
    <property type="term" value="F:growth factor activity"/>
    <property type="evidence" value="ECO:0007669"/>
    <property type="project" value="UniProtKB-KW"/>
</dbReference>
<dbReference type="GO" id="GO:0051781">
    <property type="term" value="P:positive regulation of cell division"/>
    <property type="evidence" value="ECO:0007669"/>
    <property type="project" value="UniProtKB-KW"/>
</dbReference>
<organism>
    <name type="scientific">Sus scrofa</name>
    <name type="common">Pig</name>
    <dbReference type="NCBI Taxonomy" id="9823"/>
    <lineage>
        <taxon>Eukaryota</taxon>
        <taxon>Metazoa</taxon>
        <taxon>Chordata</taxon>
        <taxon>Craniata</taxon>
        <taxon>Vertebrata</taxon>
        <taxon>Euteleostomi</taxon>
        <taxon>Mammalia</taxon>
        <taxon>Eutheria</taxon>
        <taxon>Laurasiatheria</taxon>
        <taxon>Artiodactyla</taxon>
        <taxon>Suina</taxon>
        <taxon>Suidae</taxon>
        <taxon>Sus</taxon>
    </lineage>
</organism>
<protein>
    <recommendedName>
        <fullName>Platelet-derived growth factor subunit B</fullName>
        <shortName>PDGF subunit B</shortName>
    </recommendedName>
    <alternativeName>
        <fullName>PDGF-2</fullName>
    </alternativeName>
    <alternativeName>
        <fullName>Platelet-derived growth factor B chain</fullName>
    </alternativeName>
    <alternativeName>
        <fullName>Platelet-derived growth factor beta polypeptide</fullName>
    </alternativeName>
</protein>
<name>PDGFB_PIG</name>
<reference key="1">
    <citation type="journal article" date="1984" name="EMBO J.">
        <title>Purification and properties of porcine platelet-derived growth factor.</title>
        <authorList>
            <person name="Stroobant P."/>
            <person name="Waterfield M.D."/>
        </authorList>
    </citation>
    <scope>PROTEIN SEQUENCE</scope>
</reference>
<sequence length="15" mass="1411">SLGSPAVAEPAVIAE</sequence>
<feature type="chain" id="PRO_0000162359" description="Platelet-derived growth factor subunit B">
    <location>
        <begin position="1"/>
        <end position="15" status="greater than"/>
    </location>
</feature>
<feature type="non-terminal residue">
    <location>
        <position position="15"/>
    </location>
</feature>
<comment type="function">
    <text evidence="2 3">Growth factor that plays an essential role in the regulation of embryonic development, cell proliferation, cell migration, survival and chemotaxis. Potent mitogen for cells of mesenchymal origin. Required for normal proliferation and recruitment of pericytes and vascular smooth muscle cells in the central nervous system, skin, lung, heart and placenta. Required for normal blood vessel development, and for normal development of kidney glomeruli. Plays an important role in wound healing. Signaling is modulated by the formation of heterodimers with PDGFA (By similarity).</text>
</comment>
<comment type="subunit">
    <text evidence="1 2">Antiparallel homodimer; disulfide-linked. Antiparallel heterodimer with PDGFA; disulfide-linked. The PDGFB homodimer interacts with PDGFRA and PDGFRB homodimers, and with heterodimers formed by PDGFRA and PDGFRB. The heterodimer composed of PDGFA and PDGFB interacts with PDGFRB homodimers, and with heterodimers formed by PDGFRA and PDGFRB. Interacts with XLKD1 (By similarity). Interacts with LRP1 (By similarity). Interacts with SORL1 (via the N-terminal ectodomain) (By similarity).</text>
</comment>
<comment type="subcellular location">
    <subcellularLocation>
        <location>Secreted</location>
    </subcellularLocation>
    <text evidence="1">Released by platelets upon wounding.</text>
</comment>
<comment type="similarity">
    <text evidence="4">Belongs to the PDGF/VEGF growth factor family.</text>
</comment>